<feature type="chain" id="PRO_0000282017" description="23S rRNA (uracil(747)-C(5))-methyltransferase RlmC">
    <location>
        <begin position="1"/>
        <end position="389"/>
    </location>
</feature>
<feature type="active site" description="Nucleophile" evidence="1">
    <location>
        <position position="348"/>
    </location>
</feature>
<feature type="binding site" evidence="1">
    <location>
        <position position="12"/>
    </location>
    <ligand>
        <name>[4Fe-4S] cluster</name>
        <dbReference type="ChEBI" id="CHEBI:49883"/>
    </ligand>
</feature>
<feature type="binding site" evidence="1">
    <location>
        <position position="20"/>
    </location>
    <ligand>
        <name>[4Fe-4S] cluster</name>
        <dbReference type="ChEBI" id="CHEBI:49883"/>
    </ligand>
</feature>
<feature type="binding site" evidence="1">
    <location>
        <position position="23"/>
    </location>
    <ligand>
        <name>[4Fe-4S] cluster</name>
        <dbReference type="ChEBI" id="CHEBI:49883"/>
    </ligand>
</feature>
<feature type="binding site" evidence="1">
    <location>
        <position position="99"/>
    </location>
    <ligand>
        <name>[4Fe-4S] cluster</name>
        <dbReference type="ChEBI" id="CHEBI:49883"/>
    </ligand>
</feature>
<feature type="binding site" evidence="1">
    <location>
        <position position="224"/>
    </location>
    <ligand>
        <name>S-adenosyl-L-methionine</name>
        <dbReference type="ChEBI" id="CHEBI:59789"/>
    </ligand>
</feature>
<feature type="binding site" evidence="1">
    <location>
        <position position="253"/>
    </location>
    <ligand>
        <name>S-adenosyl-L-methionine</name>
        <dbReference type="ChEBI" id="CHEBI:59789"/>
    </ligand>
</feature>
<feature type="binding site" evidence="1">
    <location>
        <position position="274"/>
    </location>
    <ligand>
        <name>S-adenosyl-L-methionine</name>
        <dbReference type="ChEBI" id="CHEBI:59789"/>
    </ligand>
</feature>
<feature type="binding site" evidence="1">
    <location>
        <position position="321"/>
    </location>
    <ligand>
        <name>S-adenosyl-L-methionine</name>
        <dbReference type="ChEBI" id="CHEBI:59789"/>
    </ligand>
</feature>
<name>RLMC_SHESW</name>
<comment type="function">
    <text evidence="1">Catalyzes the formation of 5-methyl-uridine at position 747 (m5U747) in 23S rRNA.</text>
</comment>
<comment type="catalytic activity">
    <reaction evidence="1">
        <text>uridine(747) in 23S rRNA + S-adenosyl-L-methionine = 5-methyluridine(747) in 23S rRNA + S-adenosyl-L-homocysteine + H(+)</text>
        <dbReference type="Rhea" id="RHEA:42628"/>
        <dbReference type="Rhea" id="RHEA-COMP:10154"/>
        <dbReference type="Rhea" id="RHEA-COMP:10155"/>
        <dbReference type="ChEBI" id="CHEBI:15378"/>
        <dbReference type="ChEBI" id="CHEBI:57856"/>
        <dbReference type="ChEBI" id="CHEBI:59789"/>
        <dbReference type="ChEBI" id="CHEBI:65315"/>
        <dbReference type="ChEBI" id="CHEBI:74447"/>
        <dbReference type="EC" id="2.1.1.189"/>
    </reaction>
</comment>
<comment type="similarity">
    <text evidence="1">Belongs to the class I-like SAM-binding methyltransferase superfamily. RNA M5U methyltransferase family. RlmC subfamily.</text>
</comment>
<evidence type="ECO:0000255" key="1">
    <source>
        <dbReference type="HAMAP-Rule" id="MF_01012"/>
    </source>
</evidence>
<keyword id="KW-0004">4Fe-4S</keyword>
<keyword id="KW-0408">Iron</keyword>
<keyword id="KW-0411">Iron-sulfur</keyword>
<keyword id="KW-0479">Metal-binding</keyword>
<keyword id="KW-0489">Methyltransferase</keyword>
<keyword id="KW-0698">rRNA processing</keyword>
<keyword id="KW-0949">S-adenosyl-L-methionine</keyword>
<keyword id="KW-0808">Transferase</keyword>
<accession>A1RGE6</accession>
<reference key="1">
    <citation type="submission" date="2006-12" db="EMBL/GenBank/DDBJ databases">
        <title>Complete sequence of Shewanella sp. W3-18-1.</title>
        <authorList>
            <consortium name="US DOE Joint Genome Institute"/>
            <person name="Copeland A."/>
            <person name="Lucas S."/>
            <person name="Lapidus A."/>
            <person name="Barry K."/>
            <person name="Detter J.C."/>
            <person name="Glavina del Rio T."/>
            <person name="Hammon N."/>
            <person name="Israni S."/>
            <person name="Dalin E."/>
            <person name="Tice H."/>
            <person name="Pitluck S."/>
            <person name="Chain P."/>
            <person name="Malfatti S."/>
            <person name="Shin M."/>
            <person name="Vergez L."/>
            <person name="Schmutz J."/>
            <person name="Larimer F."/>
            <person name="Land M."/>
            <person name="Hauser L."/>
            <person name="Kyrpides N."/>
            <person name="Lykidis A."/>
            <person name="Tiedje J."/>
            <person name="Richardson P."/>
        </authorList>
    </citation>
    <scope>NUCLEOTIDE SEQUENCE [LARGE SCALE GENOMIC DNA]</scope>
    <source>
        <strain>W3-18-1</strain>
    </source>
</reference>
<dbReference type="EC" id="2.1.1.189" evidence="1"/>
<dbReference type="EMBL" id="CP000503">
    <property type="protein sequence ID" value="ABM23741.1"/>
    <property type="molecule type" value="Genomic_DNA"/>
</dbReference>
<dbReference type="RefSeq" id="WP_011788268.1">
    <property type="nucleotide sequence ID" value="NC_008750.1"/>
</dbReference>
<dbReference type="SMR" id="A1RGE6"/>
<dbReference type="GeneID" id="67444635"/>
<dbReference type="KEGG" id="shw:Sputw3181_0891"/>
<dbReference type="HOGENOM" id="CLU_014689_0_0_6"/>
<dbReference type="Proteomes" id="UP000002597">
    <property type="component" value="Chromosome"/>
</dbReference>
<dbReference type="GO" id="GO:0051539">
    <property type="term" value="F:4 iron, 4 sulfur cluster binding"/>
    <property type="evidence" value="ECO:0007669"/>
    <property type="project" value="UniProtKB-KW"/>
</dbReference>
<dbReference type="GO" id="GO:0005506">
    <property type="term" value="F:iron ion binding"/>
    <property type="evidence" value="ECO:0007669"/>
    <property type="project" value="UniProtKB-UniRule"/>
</dbReference>
<dbReference type="GO" id="GO:0070041">
    <property type="term" value="F:rRNA (uridine-C5-)-methyltransferase activity"/>
    <property type="evidence" value="ECO:0007669"/>
    <property type="project" value="UniProtKB-UniRule"/>
</dbReference>
<dbReference type="GO" id="GO:0070475">
    <property type="term" value="P:rRNA base methylation"/>
    <property type="evidence" value="ECO:0007669"/>
    <property type="project" value="TreeGrafter"/>
</dbReference>
<dbReference type="CDD" id="cd02440">
    <property type="entry name" value="AdoMet_MTases"/>
    <property type="match status" value="1"/>
</dbReference>
<dbReference type="Gene3D" id="2.40.50.1070">
    <property type="match status" value="1"/>
</dbReference>
<dbReference type="Gene3D" id="3.40.50.150">
    <property type="entry name" value="Vaccinia Virus protein VP39"/>
    <property type="match status" value="1"/>
</dbReference>
<dbReference type="HAMAP" id="MF_01012">
    <property type="entry name" value="23SrRNA_methyltr_RlmC"/>
    <property type="match status" value="1"/>
</dbReference>
<dbReference type="InterPro" id="IPR011825">
    <property type="entry name" value="23SrRNA_MeTrfase_RlmC"/>
</dbReference>
<dbReference type="InterPro" id="IPR030390">
    <property type="entry name" value="MeTrfase_TrmA_AS"/>
</dbReference>
<dbReference type="InterPro" id="IPR030391">
    <property type="entry name" value="MeTrfase_TrmA_CS"/>
</dbReference>
<dbReference type="InterPro" id="IPR029063">
    <property type="entry name" value="SAM-dependent_MTases_sf"/>
</dbReference>
<dbReference type="InterPro" id="IPR010280">
    <property type="entry name" value="U5_MeTrfase_fam"/>
</dbReference>
<dbReference type="NCBIfam" id="TIGR02085">
    <property type="entry name" value="meth_trns_rumB"/>
    <property type="match status" value="1"/>
</dbReference>
<dbReference type="NCBIfam" id="TIGR00479">
    <property type="entry name" value="rumA"/>
    <property type="match status" value="1"/>
</dbReference>
<dbReference type="PANTHER" id="PTHR11061">
    <property type="entry name" value="RNA M5U METHYLTRANSFERASE"/>
    <property type="match status" value="1"/>
</dbReference>
<dbReference type="PANTHER" id="PTHR11061:SF30">
    <property type="entry name" value="TRNA (URACIL(54)-C(5))-METHYLTRANSFERASE"/>
    <property type="match status" value="1"/>
</dbReference>
<dbReference type="Pfam" id="PF05958">
    <property type="entry name" value="tRNA_U5-meth_tr"/>
    <property type="match status" value="1"/>
</dbReference>
<dbReference type="SUPFAM" id="SSF53335">
    <property type="entry name" value="S-adenosyl-L-methionine-dependent methyltransferases"/>
    <property type="match status" value="1"/>
</dbReference>
<dbReference type="PROSITE" id="PS51687">
    <property type="entry name" value="SAM_MT_RNA_M5U"/>
    <property type="match status" value="1"/>
</dbReference>
<dbReference type="PROSITE" id="PS01230">
    <property type="entry name" value="TRMA_1"/>
    <property type="match status" value="1"/>
</dbReference>
<dbReference type="PROSITE" id="PS01231">
    <property type="entry name" value="TRMA_2"/>
    <property type="match status" value="1"/>
</dbReference>
<gene>
    <name evidence="1" type="primary">rlmC</name>
    <name type="synonym">rumB</name>
    <name type="ordered locus">Sputw3181_0891</name>
</gene>
<organism>
    <name type="scientific">Shewanella sp. (strain W3-18-1)</name>
    <dbReference type="NCBI Taxonomy" id="351745"/>
    <lineage>
        <taxon>Bacteria</taxon>
        <taxon>Pseudomonadati</taxon>
        <taxon>Pseudomonadota</taxon>
        <taxon>Gammaproteobacteria</taxon>
        <taxon>Alteromonadales</taxon>
        <taxon>Shewanellaceae</taxon>
        <taxon>Shewanella</taxon>
    </lineage>
</organism>
<proteinExistence type="inferred from homology"/>
<sequence>MSAVIVNTVEQCGYFNRGQCQSCRHIQVPMAQQLMAKSLELQQLLKPFVAPSAAIFYPPVTGEATAFRNKAKMVVLGAAHAPVLGIVSPSGEAVSLCDCLLYPSDMQKLLHRLTQFVQQAGIPPYRVDKAKGELKFILLTRSQVRGEYLLRFVLRSHNSIERIERALPTLLAEYPQINVVSVNIQPIHMAILEGDEEIFLTENTRLEERFNDVPLFIRPKSFFQTNPQVAAQLYQTAREWVAEFAPKSLWDLFCGVGGFGLHCATKDIALTGIEIEAEAISCAQISANLMGLEKVQFMALDSTDFAQGKNAADKPDLIIVNPPRRGIGEALCQSLSEFAPRAILYSSCNPKTLAKDLEHIQGYHLTKVQLFDLFPHTDHFEVLAMLVKD</sequence>
<protein>
    <recommendedName>
        <fullName evidence="1">23S rRNA (uracil(747)-C(5))-methyltransferase RlmC</fullName>
        <ecNumber evidence="1">2.1.1.189</ecNumber>
    </recommendedName>
    <alternativeName>
        <fullName evidence="1">23S rRNA(m5U747)-methyltransferase</fullName>
    </alternativeName>
</protein>